<organism>
    <name type="scientific">Haemophilus ducreyi (strain 35000HP / ATCC 700724)</name>
    <dbReference type="NCBI Taxonomy" id="233412"/>
    <lineage>
        <taxon>Bacteria</taxon>
        <taxon>Pseudomonadati</taxon>
        <taxon>Pseudomonadota</taxon>
        <taxon>Gammaproteobacteria</taxon>
        <taxon>Pasteurellales</taxon>
        <taxon>Pasteurellaceae</taxon>
        <taxon>Haemophilus</taxon>
    </lineage>
</organism>
<dbReference type="EC" id="5.4.99.26"/>
<dbReference type="EMBL" id="AE017143">
    <property type="protein sequence ID" value="AAP95999.1"/>
    <property type="molecule type" value="Genomic_DNA"/>
</dbReference>
<dbReference type="RefSeq" id="WP_010945048.1">
    <property type="nucleotide sequence ID" value="NC_002940.2"/>
</dbReference>
<dbReference type="SMR" id="P59840"/>
<dbReference type="STRING" id="233412.HD_1138"/>
<dbReference type="KEGG" id="hdu:HD_1138"/>
<dbReference type="eggNOG" id="COG0564">
    <property type="taxonomic scope" value="Bacteria"/>
</dbReference>
<dbReference type="HOGENOM" id="CLU_016902_11_4_6"/>
<dbReference type="OrthoDB" id="9785808at2"/>
<dbReference type="Proteomes" id="UP000001022">
    <property type="component" value="Chromosome"/>
</dbReference>
<dbReference type="GO" id="GO:0003723">
    <property type="term" value="F:RNA binding"/>
    <property type="evidence" value="ECO:0007669"/>
    <property type="project" value="InterPro"/>
</dbReference>
<dbReference type="GO" id="GO:0160149">
    <property type="term" value="F:tRNA pseudouridine(65) synthase activity"/>
    <property type="evidence" value="ECO:0007669"/>
    <property type="project" value="UniProtKB-EC"/>
</dbReference>
<dbReference type="GO" id="GO:0000455">
    <property type="term" value="P:enzyme-directed rRNA pseudouridine synthesis"/>
    <property type="evidence" value="ECO:0007669"/>
    <property type="project" value="TreeGrafter"/>
</dbReference>
<dbReference type="GO" id="GO:0008033">
    <property type="term" value="P:tRNA processing"/>
    <property type="evidence" value="ECO:0007669"/>
    <property type="project" value="UniProtKB-KW"/>
</dbReference>
<dbReference type="CDD" id="cd02563">
    <property type="entry name" value="PseudoU_synth_TruC"/>
    <property type="match status" value="1"/>
</dbReference>
<dbReference type="Gene3D" id="3.30.2350.10">
    <property type="entry name" value="Pseudouridine synthase"/>
    <property type="match status" value="1"/>
</dbReference>
<dbReference type="InterPro" id="IPR020103">
    <property type="entry name" value="PsdUridine_synth_cat_dom_sf"/>
</dbReference>
<dbReference type="InterPro" id="IPR006224">
    <property type="entry name" value="PsdUridine_synth_RluA-like_CS"/>
</dbReference>
<dbReference type="InterPro" id="IPR006145">
    <property type="entry name" value="PsdUridine_synth_RsuA/RluA"/>
</dbReference>
<dbReference type="InterPro" id="IPR050188">
    <property type="entry name" value="RluA_PseudoU_synthase"/>
</dbReference>
<dbReference type="NCBIfam" id="NF008321">
    <property type="entry name" value="PRK11112.1"/>
    <property type="match status" value="1"/>
</dbReference>
<dbReference type="PANTHER" id="PTHR21600">
    <property type="entry name" value="MITOCHONDRIAL RNA PSEUDOURIDINE SYNTHASE"/>
    <property type="match status" value="1"/>
</dbReference>
<dbReference type="PANTHER" id="PTHR21600:SF56">
    <property type="entry name" value="TRNA PSEUDOURIDINE SYNTHASE C"/>
    <property type="match status" value="1"/>
</dbReference>
<dbReference type="Pfam" id="PF00849">
    <property type="entry name" value="PseudoU_synth_2"/>
    <property type="match status" value="1"/>
</dbReference>
<dbReference type="SUPFAM" id="SSF55120">
    <property type="entry name" value="Pseudouridine synthase"/>
    <property type="match status" value="1"/>
</dbReference>
<dbReference type="PROSITE" id="PS01129">
    <property type="entry name" value="PSI_RLU"/>
    <property type="match status" value="1"/>
</dbReference>
<feature type="chain" id="PRO_0000162714" description="tRNA pseudouridine synthase C">
    <location>
        <begin position="1"/>
        <end position="243"/>
    </location>
</feature>
<feature type="active site" evidence="1">
    <location>
        <position position="55"/>
    </location>
</feature>
<gene>
    <name type="primary">truC</name>
    <name type="ordered locus">HD_1138</name>
</gene>
<sequence>MELDILYRDDELIAINKPAGMLVHRSWLDKAETLFAMQTLRDQINQHVFPIHRLDRPTSGVLLFALNSEMARLMSEQFEQHKVEKEYLAIVRGYIAEKGEIDYPLKVILDKIADKFSQPKAAQQAVTFYQNLAKVEMPYSTGKYATTRYSLVALSPKTGRKHQLRRHMKHLFHPIMGDTKYGDLHQNRRLTEKTGCNRLMLHARLLHFTHPKTLQKITISALLDQQWQMLFNQFGWHFTDFFY</sequence>
<comment type="function">
    <text evidence="1">Responsible for synthesis of pseudouridine from uracil-65 in transfer RNAs.</text>
</comment>
<comment type="catalytic activity">
    <reaction>
        <text>uridine(65) in tRNA = pseudouridine(65) in tRNA</text>
        <dbReference type="Rhea" id="RHEA:42536"/>
        <dbReference type="Rhea" id="RHEA-COMP:10103"/>
        <dbReference type="Rhea" id="RHEA-COMP:10104"/>
        <dbReference type="ChEBI" id="CHEBI:65314"/>
        <dbReference type="ChEBI" id="CHEBI:65315"/>
        <dbReference type="EC" id="5.4.99.26"/>
    </reaction>
</comment>
<comment type="similarity">
    <text evidence="2">Belongs to the pseudouridine synthase RluA family.</text>
</comment>
<protein>
    <recommendedName>
        <fullName>tRNA pseudouridine synthase C</fullName>
        <ecNumber>5.4.99.26</ecNumber>
    </recommendedName>
    <alternativeName>
        <fullName>tRNA pseudouridine(65) synthase</fullName>
    </alternativeName>
    <alternativeName>
        <fullName>tRNA pseudouridylate synthase C</fullName>
    </alternativeName>
    <alternativeName>
        <fullName>tRNA-uridine isomerase C</fullName>
    </alternativeName>
</protein>
<evidence type="ECO:0000250" key="1"/>
<evidence type="ECO:0000305" key="2"/>
<keyword id="KW-0413">Isomerase</keyword>
<keyword id="KW-1185">Reference proteome</keyword>
<keyword id="KW-0819">tRNA processing</keyword>
<proteinExistence type="inferred from homology"/>
<name>TRUC_HAEDU</name>
<reference key="1">
    <citation type="submission" date="2003-06" db="EMBL/GenBank/DDBJ databases">
        <title>The complete genome sequence of Haemophilus ducreyi.</title>
        <authorList>
            <person name="Munson R.S. Jr."/>
            <person name="Ray W.C."/>
            <person name="Mahairas G."/>
            <person name="Sabo P."/>
            <person name="Mungur R."/>
            <person name="Johnson L."/>
            <person name="Nguyen D."/>
            <person name="Wang J."/>
            <person name="Forst C."/>
            <person name="Hood L."/>
        </authorList>
    </citation>
    <scope>NUCLEOTIDE SEQUENCE [LARGE SCALE GENOMIC DNA]</scope>
    <source>
        <strain>35000HP / ATCC 700724</strain>
    </source>
</reference>
<accession>P59840</accession>